<dbReference type="EC" id="4.2.1.109" evidence="1"/>
<dbReference type="EMBL" id="AE000657">
    <property type="protein sequence ID" value="AAC07751.1"/>
    <property type="molecule type" value="Genomic_DNA"/>
</dbReference>
<dbReference type="PIR" id="H70469">
    <property type="entry name" value="H70469"/>
</dbReference>
<dbReference type="RefSeq" id="NP_214357.1">
    <property type="nucleotide sequence ID" value="NC_000918.1"/>
</dbReference>
<dbReference type="RefSeq" id="WP_010881293.1">
    <property type="nucleotide sequence ID" value="NC_000918.1"/>
</dbReference>
<dbReference type="PDB" id="2IRP">
    <property type="method" value="X-ray"/>
    <property type="resolution" value="2.40 A"/>
    <property type="chains" value="A/B=1-208"/>
</dbReference>
<dbReference type="PDBsum" id="2IRP"/>
<dbReference type="SMR" id="O67788"/>
<dbReference type="FunCoup" id="O67788">
    <property type="interactions" value="116"/>
</dbReference>
<dbReference type="STRING" id="224324.aq_1979"/>
<dbReference type="EnsemblBacteria" id="AAC07751">
    <property type="protein sequence ID" value="AAC07751"/>
    <property type="gene ID" value="aq_1979"/>
</dbReference>
<dbReference type="KEGG" id="aae:aq_1979"/>
<dbReference type="PATRIC" id="fig|224324.8.peg.1528"/>
<dbReference type="eggNOG" id="COG0235">
    <property type="taxonomic scope" value="Bacteria"/>
</dbReference>
<dbReference type="HOGENOM" id="CLU_006033_4_1_0"/>
<dbReference type="InParanoid" id="O67788"/>
<dbReference type="OrthoDB" id="9805559at2"/>
<dbReference type="UniPathway" id="UPA00904">
    <property type="reaction ID" value="UER00875"/>
</dbReference>
<dbReference type="EvolutionaryTrace" id="O67788"/>
<dbReference type="Proteomes" id="UP000000798">
    <property type="component" value="Chromosome"/>
</dbReference>
<dbReference type="GO" id="GO:0005737">
    <property type="term" value="C:cytoplasm"/>
    <property type="evidence" value="ECO:0000318"/>
    <property type="project" value="GO_Central"/>
</dbReference>
<dbReference type="GO" id="GO:0046570">
    <property type="term" value="F:methylthioribulose 1-phosphate dehydratase activity"/>
    <property type="evidence" value="ECO:0000318"/>
    <property type="project" value="GO_Central"/>
</dbReference>
<dbReference type="GO" id="GO:0008270">
    <property type="term" value="F:zinc ion binding"/>
    <property type="evidence" value="ECO:0007669"/>
    <property type="project" value="UniProtKB-UniRule"/>
</dbReference>
<dbReference type="GO" id="GO:0019509">
    <property type="term" value="P:L-methionine salvage from methylthioadenosine"/>
    <property type="evidence" value="ECO:0000318"/>
    <property type="project" value="GO_Central"/>
</dbReference>
<dbReference type="Gene3D" id="3.40.225.10">
    <property type="entry name" value="Class II aldolase/adducin N-terminal domain"/>
    <property type="match status" value="1"/>
</dbReference>
<dbReference type="HAMAP" id="MF_01677">
    <property type="entry name" value="Salvage_MtnB"/>
    <property type="match status" value="1"/>
</dbReference>
<dbReference type="InterPro" id="IPR050197">
    <property type="entry name" value="Aldolase_class_II_sugar_metab"/>
</dbReference>
<dbReference type="InterPro" id="IPR001303">
    <property type="entry name" value="Aldolase_II/adducin_N"/>
</dbReference>
<dbReference type="InterPro" id="IPR036409">
    <property type="entry name" value="Aldolase_II/adducin_N_sf"/>
</dbReference>
<dbReference type="InterPro" id="IPR017714">
    <property type="entry name" value="MethylthioRu-1-P_deHdtase_MtnB"/>
</dbReference>
<dbReference type="NCBIfam" id="NF006672">
    <property type="entry name" value="PRK09220.1"/>
    <property type="match status" value="1"/>
</dbReference>
<dbReference type="NCBIfam" id="TIGR03328">
    <property type="entry name" value="salvage_mtnB"/>
    <property type="match status" value="1"/>
</dbReference>
<dbReference type="PANTHER" id="PTHR22789:SF0">
    <property type="entry name" value="3-OXO-TETRONATE 4-PHOSPHATE DECARBOXYLASE-RELATED"/>
    <property type="match status" value="1"/>
</dbReference>
<dbReference type="PANTHER" id="PTHR22789">
    <property type="entry name" value="FUCULOSE PHOSPHATE ALDOLASE"/>
    <property type="match status" value="1"/>
</dbReference>
<dbReference type="Pfam" id="PF00596">
    <property type="entry name" value="Aldolase_II"/>
    <property type="match status" value="1"/>
</dbReference>
<dbReference type="SMART" id="SM01007">
    <property type="entry name" value="Aldolase_II"/>
    <property type="match status" value="1"/>
</dbReference>
<dbReference type="SUPFAM" id="SSF53639">
    <property type="entry name" value="AraD/HMP-PK domain-like"/>
    <property type="match status" value="1"/>
</dbReference>
<gene>
    <name evidence="1" type="primary">mtnB</name>
    <name type="ordered locus">aq_1979</name>
</gene>
<proteinExistence type="evidence at protein level"/>
<sequence>MNVELFKKFSEKVEEIIEAGRILHSRGWVPATSGNISAKVSEEYIAITASGKHKGKLTPEDILLIDYEGRPVGGGKPSAETLLHTTVYKLFPEVNAVVHTHSPNATVISIVEKKDFVELEDYELLKAFPDIHTHEVKIKIPIFPNEQNIPLLAKEVENYFKTSEDKYGFLIRGHGLYTWGRSMEEALIHTEALEFIFECELKLLSFHS</sequence>
<keyword id="KW-0002">3D-structure</keyword>
<keyword id="KW-0028">Amino-acid biosynthesis</keyword>
<keyword id="KW-0456">Lyase</keyword>
<keyword id="KW-0479">Metal-binding</keyword>
<keyword id="KW-0486">Methionine biosynthesis</keyword>
<keyword id="KW-1185">Reference proteome</keyword>
<keyword id="KW-0862">Zinc</keyword>
<feature type="chain" id="PRO_0000162933" description="Methylthioribulose-1-phosphate dehydratase">
    <location>
        <begin position="1"/>
        <end position="208"/>
    </location>
</feature>
<feature type="binding site" evidence="1">
    <location>
        <position position="99"/>
    </location>
    <ligand>
        <name>Zn(2+)</name>
        <dbReference type="ChEBI" id="CHEBI:29105"/>
    </ligand>
</feature>
<feature type="binding site" evidence="1">
    <location>
        <position position="101"/>
    </location>
    <ligand>
        <name>Zn(2+)</name>
        <dbReference type="ChEBI" id="CHEBI:29105"/>
    </ligand>
</feature>
<feature type="helix" evidence="2">
    <location>
        <begin position="5"/>
        <end position="25"/>
    </location>
</feature>
<feature type="helix" evidence="2">
    <location>
        <begin position="30"/>
        <end position="32"/>
    </location>
</feature>
<feature type="strand" evidence="2">
    <location>
        <begin position="35"/>
        <end position="39"/>
    </location>
</feature>
<feature type="strand" evidence="2">
    <location>
        <begin position="41"/>
        <end position="48"/>
    </location>
</feature>
<feature type="helix" evidence="2">
    <location>
        <begin position="54"/>
        <end position="56"/>
    </location>
</feature>
<feature type="helix" evidence="2">
    <location>
        <begin position="59"/>
        <end position="61"/>
    </location>
</feature>
<feature type="strand" evidence="2">
    <location>
        <begin position="62"/>
        <end position="66"/>
    </location>
</feature>
<feature type="helix" evidence="2">
    <location>
        <begin position="79"/>
        <end position="90"/>
    </location>
</feature>
<feature type="strand" evidence="2">
    <location>
        <begin position="96"/>
        <end position="100"/>
    </location>
</feature>
<feature type="helix" evidence="2">
    <location>
        <begin position="103"/>
        <end position="111"/>
    </location>
</feature>
<feature type="strand" evidence="2">
    <location>
        <begin position="114"/>
        <end position="118"/>
    </location>
</feature>
<feature type="helix" evidence="2">
    <location>
        <begin position="122"/>
        <end position="125"/>
    </location>
</feature>
<feature type="strand" evidence="2">
    <location>
        <begin position="139"/>
        <end position="143"/>
    </location>
</feature>
<feature type="helix" evidence="2">
    <location>
        <begin position="149"/>
        <end position="162"/>
    </location>
</feature>
<feature type="strand" evidence="2">
    <location>
        <begin position="169"/>
        <end position="171"/>
    </location>
</feature>
<feature type="turn" evidence="2">
    <location>
        <begin position="172"/>
        <end position="174"/>
    </location>
</feature>
<feature type="strand" evidence="2">
    <location>
        <begin position="175"/>
        <end position="182"/>
    </location>
</feature>
<feature type="helix" evidence="2">
    <location>
        <begin position="183"/>
        <end position="203"/>
    </location>
</feature>
<protein>
    <recommendedName>
        <fullName evidence="1">Methylthioribulose-1-phosphate dehydratase</fullName>
        <shortName evidence="1">MTRu-1-P dehydratase</shortName>
        <ecNumber evidence="1">4.2.1.109</ecNumber>
    </recommendedName>
</protein>
<evidence type="ECO:0000255" key="1">
    <source>
        <dbReference type="HAMAP-Rule" id="MF_01677"/>
    </source>
</evidence>
<evidence type="ECO:0007829" key="2">
    <source>
        <dbReference type="PDB" id="2IRP"/>
    </source>
</evidence>
<organism>
    <name type="scientific">Aquifex aeolicus (strain VF5)</name>
    <dbReference type="NCBI Taxonomy" id="224324"/>
    <lineage>
        <taxon>Bacteria</taxon>
        <taxon>Pseudomonadati</taxon>
        <taxon>Aquificota</taxon>
        <taxon>Aquificia</taxon>
        <taxon>Aquificales</taxon>
        <taxon>Aquificaceae</taxon>
        <taxon>Aquifex</taxon>
    </lineage>
</organism>
<accession>O67788</accession>
<name>MTNB_AQUAE</name>
<comment type="function">
    <text evidence="1">Catalyzes the dehydration of methylthioribulose-1-phosphate (MTRu-1-P) into 2,3-diketo-5-methylthiopentyl-1-phosphate (DK-MTP-1-P).</text>
</comment>
<comment type="catalytic activity">
    <reaction evidence="1">
        <text>5-(methylsulfanyl)-D-ribulose 1-phosphate = 5-methylsulfanyl-2,3-dioxopentyl phosphate + H2O</text>
        <dbReference type="Rhea" id="RHEA:15549"/>
        <dbReference type="ChEBI" id="CHEBI:15377"/>
        <dbReference type="ChEBI" id="CHEBI:58548"/>
        <dbReference type="ChEBI" id="CHEBI:58828"/>
        <dbReference type="EC" id="4.2.1.109"/>
    </reaction>
</comment>
<comment type="cofactor">
    <cofactor evidence="1">
        <name>Zn(2+)</name>
        <dbReference type="ChEBI" id="CHEBI:29105"/>
    </cofactor>
    <text evidence="1">Binds 1 zinc ion per subunit.</text>
</comment>
<comment type="pathway">
    <text evidence="1">Amino-acid biosynthesis; L-methionine biosynthesis via salvage pathway; L-methionine from S-methyl-5-thio-alpha-D-ribose 1-phosphate: step 2/6.</text>
</comment>
<comment type="similarity">
    <text evidence="1">Belongs to the aldolase class II family. MtnB subfamily.</text>
</comment>
<reference key="1">
    <citation type="journal article" date="1998" name="Nature">
        <title>The complete genome of the hyperthermophilic bacterium Aquifex aeolicus.</title>
        <authorList>
            <person name="Deckert G."/>
            <person name="Warren P.V."/>
            <person name="Gaasterland T."/>
            <person name="Young W.G."/>
            <person name="Lenox A.L."/>
            <person name="Graham D.E."/>
            <person name="Overbeek R."/>
            <person name="Snead M.A."/>
            <person name="Keller M."/>
            <person name="Aujay M."/>
            <person name="Huber R."/>
            <person name="Feldman R.A."/>
            <person name="Short J.M."/>
            <person name="Olsen G.J."/>
            <person name="Swanson R.V."/>
        </authorList>
    </citation>
    <scope>NUCLEOTIDE SEQUENCE [LARGE SCALE GENOMIC DNA]</scope>
    <source>
        <strain>VF5</strain>
    </source>
</reference>
<reference key="2">
    <citation type="submission" date="2007-12" db="PDB data bank">
        <title>Crystal structure of the L-fuculose-1-phosphate aldolase (aq_1979) from Aquifex aeolicus VF5.</title>
        <authorList>
            <consortium name="RIKEN structural genomics initiative (RSGI)"/>
        </authorList>
    </citation>
    <scope>X-RAY CRYSTALLOGRAPHY (2.4 ANGSTROMS)</scope>
</reference>